<organism evidence="4">
    <name type="scientific">Bombyx mori</name>
    <name type="common">Silk moth</name>
    <dbReference type="NCBI Taxonomy" id="7091"/>
    <lineage>
        <taxon>Eukaryota</taxon>
        <taxon>Metazoa</taxon>
        <taxon>Ecdysozoa</taxon>
        <taxon>Arthropoda</taxon>
        <taxon>Hexapoda</taxon>
        <taxon>Insecta</taxon>
        <taxon>Pterygota</taxon>
        <taxon>Neoptera</taxon>
        <taxon>Endopterygota</taxon>
        <taxon>Lepidoptera</taxon>
        <taxon>Glossata</taxon>
        <taxon>Ditrysia</taxon>
        <taxon>Bombycoidea</taxon>
        <taxon>Bombycidae</taxon>
        <taxon>Bombycinae</taxon>
        <taxon>Bombyx</taxon>
    </lineage>
</organism>
<protein>
    <recommendedName>
        <fullName>Trypsin inhibitor</fullName>
    </recommendedName>
    <alternativeName>
        <fullName>Cocoon shell-associated trypsin inhibitor</fullName>
        <shortName>CSTI</shortName>
    </alternativeName>
</protein>
<keyword id="KW-0217">Developmental protein</keyword>
<keyword id="KW-0903">Direct protein sequencing</keyword>
<keyword id="KW-1015">Disulfide bond</keyword>
<keyword id="KW-0646">Protease inhibitor</keyword>
<keyword id="KW-1185">Reference proteome</keyword>
<keyword id="KW-0722">Serine protease inhibitor</keyword>
<accession>P81902</accession>
<feature type="chain" id="PRO_0000155424" description="Trypsin inhibitor">
    <location>
        <begin position="1"/>
        <end position="55"/>
    </location>
</feature>
<feature type="domain" description="BPTI/Kunitz inhibitor" evidence="2">
    <location>
        <begin position="4"/>
        <end position="54"/>
    </location>
</feature>
<feature type="site" description="Reactive bond for trypsin" evidence="1">
    <location>
        <begin position="14"/>
        <end position="15"/>
    </location>
</feature>
<feature type="disulfide bond" evidence="2">
    <location>
        <begin position="4"/>
        <end position="54"/>
    </location>
</feature>
<feature type="disulfide bond" evidence="2">
    <location>
        <begin position="13"/>
        <end position="37"/>
    </location>
</feature>
<feature type="disulfide bond" evidence="2">
    <location>
        <begin position="29"/>
        <end position="50"/>
    </location>
</feature>
<dbReference type="SMR" id="P81902"/>
<dbReference type="FunCoup" id="P81902">
    <property type="interactions" value="39"/>
</dbReference>
<dbReference type="STRING" id="7091.P81902"/>
<dbReference type="InParanoid" id="P81902"/>
<dbReference type="Proteomes" id="UP000005204">
    <property type="component" value="Unassembled WGS sequence"/>
</dbReference>
<dbReference type="GO" id="GO:0005615">
    <property type="term" value="C:extracellular space"/>
    <property type="evidence" value="ECO:0007669"/>
    <property type="project" value="TreeGrafter"/>
</dbReference>
<dbReference type="GO" id="GO:0004867">
    <property type="term" value="F:serine-type endopeptidase inhibitor activity"/>
    <property type="evidence" value="ECO:0007669"/>
    <property type="project" value="UniProtKB-KW"/>
</dbReference>
<dbReference type="CDD" id="cd22603">
    <property type="entry name" value="Kunitz_SmCI_3-like"/>
    <property type="match status" value="1"/>
</dbReference>
<dbReference type="FunFam" id="4.10.410.10:FF:000021">
    <property type="entry name" value="Serine protease inhibitor, putative"/>
    <property type="match status" value="1"/>
</dbReference>
<dbReference type="Gene3D" id="4.10.410.10">
    <property type="entry name" value="Pancreatic trypsin inhibitor Kunitz domain"/>
    <property type="match status" value="1"/>
</dbReference>
<dbReference type="InterPro" id="IPR002223">
    <property type="entry name" value="Kunitz_BPTI"/>
</dbReference>
<dbReference type="InterPro" id="IPR036880">
    <property type="entry name" value="Kunitz_BPTI_sf"/>
</dbReference>
<dbReference type="InterPro" id="IPR020901">
    <property type="entry name" value="Prtase_inh_Kunz-CS"/>
</dbReference>
<dbReference type="InterPro" id="IPR050098">
    <property type="entry name" value="TFPI/VKTCI-like"/>
</dbReference>
<dbReference type="PANTHER" id="PTHR10083:SF374">
    <property type="entry name" value="BPTI_KUNITZ INHIBITOR DOMAIN-CONTAINING PROTEIN"/>
    <property type="match status" value="1"/>
</dbReference>
<dbReference type="PANTHER" id="PTHR10083">
    <property type="entry name" value="KUNITZ-TYPE PROTEASE INHIBITOR-RELATED"/>
    <property type="match status" value="1"/>
</dbReference>
<dbReference type="Pfam" id="PF00014">
    <property type="entry name" value="Kunitz_BPTI"/>
    <property type="match status" value="1"/>
</dbReference>
<dbReference type="PRINTS" id="PR00759">
    <property type="entry name" value="BASICPTASE"/>
</dbReference>
<dbReference type="SMART" id="SM00131">
    <property type="entry name" value="KU"/>
    <property type="match status" value="1"/>
</dbReference>
<dbReference type="SUPFAM" id="SSF57362">
    <property type="entry name" value="BPTI-like"/>
    <property type="match status" value="1"/>
</dbReference>
<dbReference type="PROSITE" id="PS00280">
    <property type="entry name" value="BPTI_KUNITZ_1"/>
    <property type="match status" value="1"/>
</dbReference>
<dbReference type="PROSITE" id="PS50279">
    <property type="entry name" value="BPTI_KUNITZ_2"/>
    <property type="match status" value="1"/>
</dbReference>
<name>CSTI_BOMMO</name>
<sequence length="55" mass="6027">NPDCLLPIKTGPCKGSFPRYAYDSSEDKCVEFIYGGCQANANNFETIEECEAACL</sequence>
<comment type="function">
    <text>This cocoon shell-associated protein inhibits trypsin Activity by forming a low-dissociation complex with trypsin. May play an important part in regulating proteolytic activity in the silk gland or protecting silk proteins from degradation during histolysis.</text>
</comment>
<comment type="subunit">
    <text>Monomer.</text>
</comment>
<comment type="tissue specificity">
    <text>Expressed exclusively in the middle silk gland.</text>
</comment>
<comment type="developmental stage">
    <text>Expression differentially regulated in the middle silk glands during the final stage of larval growth with highest expression before the onset of spinning.</text>
</comment>
<comment type="mass spectrometry" mass="6658.0" method="Electrospray" evidence="3"/>
<comment type="miscellaneous">
    <text>Has an isoelectric point of 4.3.</text>
</comment>
<reference evidence="4" key="1">
    <citation type="journal article" date="1999" name="Eur. J. Biochem.">
        <title>Primary structure and possible functions of a trypsin inhibitor of Bombyx mori.</title>
        <authorList>
            <person name="Kurioka A."/>
            <person name="Yamazaki M."/>
            <person name="Hirano H."/>
        </authorList>
    </citation>
    <scope>PROTEIN SEQUENCE</scope>
    <scope>CHARACTERIZATION</scope>
    <scope>MASS SPECTROMETRY</scope>
    <source>
        <strain>Asahi</strain>
    </source>
</reference>
<proteinExistence type="evidence at protein level"/>
<evidence type="ECO:0000250" key="1"/>
<evidence type="ECO:0000255" key="2">
    <source>
        <dbReference type="PROSITE-ProRule" id="PRU00031"/>
    </source>
</evidence>
<evidence type="ECO:0000269" key="3">
    <source>
    </source>
</evidence>
<evidence type="ECO:0000305" key="4"/>